<proteinExistence type="inferred from homology"/>
<feature type="chain" id="PRO_0000168302" description="Dihydrofolate synthase/folylpolyglutamate synthase">
    <location>
        <begin position="1"/>
        <end position="426"/>
    </location>
</feature>
<feature type="binding site" evidence="1">
    <location>
        <begin position="58"/>
        <end position="61"/>
    </location>
    <ligand>
        <name>ATP</name>
        <dbReference type="ChEBI" id="CHEBI:30616"/>
    </ligand>
</feature>
<feature type="binding site" evidence="1">
    <location>
        <position position="82"/>
    </location>
    <ligand>
        <name>Mg(2+)</name>
        <dbReference type="ChEBI" id="CHEBI:18420"/>
        <label>1</label>
    </ligand>
</feature>
<feature type="binding site" evidence="1">
    <location>
        <begin position="121"/>
        <end position="124"/>
    </location>
    <ligand>
        <name>7,8-dihydropteroate</name>
        <dbReference type="ChEBI" id="CHEBI:17839"/>
    </ligand>
</feature>
<feature type="binding site" evidence="1">
    <location>
        <position position="145"/>
    </location>
    <ligand>
        <name>Mg(2+)</name>
        <dbReference type="ChEBI" id="CHEBI:18420"/>
        <label>1</label>
    </ligand>
</feature>
<feature type="binding site" evidence="1">
    <location>
        <begin position="152"/>
        <end position="154"/>
    </location>
    <ligand>
        <name>7,8-dihydropteroate</name>
        <dbReference type="ChEBI" id="CHEBI:17839"/>
    </ligand>
</feature>
<feature type="binding site" evidence="1">
    <location>
        <position position="172"/>
    </location>
    <ligand>
        <name>Mg(2+)</name>
        <dbReference type="ChEBI" id="CHEBI:18420"/>
        <label>2</label>
    </ligand>
</feature>
<feature type="binding site" evidence="1">
    <location>
        <position position="289"/>
    </location>
    <ligand>
        <name>ATP</name>
        <dbReference type="ChEBI" id="CHEBI:30616"/>
    </ligand>
</feature>
<feature type="binding site" evidence="1">
    <location>
        <position position="302"/>
    </location>
    <ligand>
        <name>ATP</name>
        <dbReference type="ChEBI" id="CHEBI:30616"/>
    </ligand>
</feature>
<accession>Q89AT2</accession>
<reference key="1">
    <citation type="journal article" date="2003" name="Proc. Natl. Acad. Sci. U.S.A.">
        <title>Reductive genome evolution in Buchnera aphidicola.</title>
        <authorList>
            <person name="van Ham R.C.H.J."/>
            <person name="Kamerbeek J."/>
            <person name="Palacios C."/>
            <person name="Rausell C."/>
            <person name="Abascal F."/>
            <person name="Bastolla U."/>
            <person name="Fernandez J.M."/>
            <person name="Jimenez L."/>
            <person name="Postigo M."/>
            <person name="Silva F.J."/>
            <person name="Tamames J."/>
            <person name="Viguera E."/>
            <person name="Latorre A."/>
            <person name="Valencia A."/>
            <person name="Moran F."/>
            <person name="Moya A."/>
        </authorList>
    </citation>
    <scope>NUCLEOTIDE SEQUENCE [LARGE SCALE GENOMIC DNA]</scope>
    <source>
        <strain>Bp</strain>
    </source>
</reference>
<comment type="function">
    <text evidence="1">Functions in two distinct reactions of the de novo folate biosynthetic pathway. Catalyzes the addition of a glutamate residue to dihydropteroate (7,8-dihydropteroate or H2Pte) to form dihydrofolate (7,8-dihydrofolate monoglutamate or H2Pte-Glu). Also catalyzes successive additions of L-glutamate to tetrahydrofolate or 10-formyltetrahydrofolate or 5,10-methylenetetrahydrofolate, leading to folylpolyglutamate derivatives.</text>
</comment>
<comment type="catalytic activity">
    <reaction evidence="1">
        <text>7,8-dihydropteroate + L-glutamate + ATP = 7,8-dihydrofolate + ADP + phosphate + H(+)</text>
        <dbReference type="Rhea" id="RHEA:23584"/>
        <dbReference type="ChEBI" id="CHEBI:15378"/>
        <dbReference type="ChEBI" id="CHEBI:17839"/>
        <dbReference type="ChEBI" id="CHEBI:29985"/>
        <dbReference type="ChEBI" id="CHEBI:30616"/>
        <dbReference type="ChEBI" id="CHEBI:43474"/>
        <dbReference type="ChEBI" id="CHEBI:57451"/>
        <dbReference type="ChEBI" id="CHEBI:456216"/>
        <dbReference type="EC" id="6.3.2.12"/>
    </reaction>
</comment>
<comment type="catalytic activity">
    <reaction evidence="1">
        <text>(6S)-5,6,7,8-tetrahydrofolyl-(gamma-L-Glu)(n) + L-glutamate + ATP = (6S)-5,6,7,8-tetrahydrofolyl-(gamma-L-Glu)(n+1) + ADP + phosphate + H(+)</text>
        <dbReference type="Rhea" id="RHEA:10580"/>
        <dbReference type="Rhea" id="RHEA-COMP:14738"/>
        <dbReference type="Rhea" id="RHEA-COMP:14740"/>
        <dbReference type="ChEBI" id="CHEBI:15378"/>
        <dbReference type="ChEBI" id="CHEBI:29985"/>
        <dbReference type="ChEBI" id="CHEBI:30616"/>
        <dbReference type="ChEBI" id="CHEBI:43474"/>
        <dbReference type="ChEBI" id="CHEBI:141005"/>
        <dbReference type="ChEBI" id="CHEBI:456216"/>
        <dbReference type="EC" id="6.3.2.17"/>
    </reaction>
</comment>
<comment type="catalytic activity">
    <reaction evidence="1">
        <text>10-formyltetrahydrofolyl-(gamma-L-Glu)(n) + L-glutamate + ATP = 10-formyltetrahydrofolyl-(gamma-L-Glu)(n+1) + ADP + phosphate + H(+)</text>
        <dbReference type="Rhea" id="RHEA:51904"/>
        <dbReference type="Rhea" id="RHEA-COMP:13088"/>
        <dbReference type="Rhea" id="RHEA-COMP:14300"/>
        <dbReference type="ChEBI" id="CHEBI:15378"/>
        <dbReference type="ChEBI" id="CHEBI:29985"/>
        <dbReference type="ChEBI" id="CHEBI:30616"/>
        <dbReference type="ChEBI" id="CHEBI:43474"/>
        <dbReference type="ChEBI" id="CHEBI:134413"/>
        <dbReference type="ChEBI" id="CHEBI:456216"/>
        <dbReference type="EC" id="6.3.2.17"/>
    </reaction>
</comment>
<comment type="catalytic activity">
    <reaction evidence="1">
        <text>(6R)-5,10-methylenetetrahydrofolyl-(gamma-L-Glu)(n) + L-glutamate + ATP = (6R)-5,10-methylenetetrahydrofolyl-(gamma-L-Glu)(n+1) + ADP + phosphate + H(+)</text>
        <dbReference type="Rhea" id="RHEA:51912"/>
        <dbReference type="Rhea" id="RHEA-COMP:13257"/>
        <dbReference type="Rhea" id="RHEA-COMP:13258"/>
        <dbReference type="ChEBI" id="CHEBI:15378"/>
        <dbReference type="ChEBI" id="CHEBI:29985"/>
        <dbReference type="ChEBI" id="CHEBI:30616"/>
        <dbReference type="ChEBI" id="CHEBI:43474"/>
        <dbReference type="ChEBI" id="CHEBI:136572"/>
        <dbReference type="ChEBI" id="CHEBI:456216"/>
        <dbReference type="EC" id="6.3.2.17"/>
    </reaction>
</comment>
<comment type="cofactor">
    <cofactor evidence="1">
        <name>Mg(2+)</name>
        <dbReference type="ChEBI" id="CHEBI:18420"/>
    </cofactor>
    <text evidence="1">Binds 2 Mg(2+) ions per subunit.</text>
</comment>
<comment type="pathway">
    <text evidence="1">Cofactor biosynthesis; tetrahydrofolate biosynthesis; 7,8-dihydrofolate from 2-amino-4-hydroxy-6-hydroxymethyl-7,8-dihydropteridine diphosphate and 4-aminobenzoate: step 2/2.</text>
</comment>
<comment type="pathway">
    <text evidence="1">Cofactor biosynthesis; tetrahydrofolylpolyglutamate biosynthesis.</text>
</comment>
<comment type="subunit">
    <text evidence="1">Monomer.</text>
</comment>
<comment type="similarity">
    <text evidence="2">Belongs to the folylpolyglutamate synthase family.</text>
</comment>
<organism>
    <name type="scientific">Buchnera aphidicola subsp. Baizongia pistaciae (strain Bp)</name>
    <dbReference type="NCBI Taxonomy" id="224915"/>
    <lineage>
        <taxon>Bacteria</taxon>
        <taxon>Pseudomonadati</taxon>
        <taxon>Pseudomonadota</taxon>
        <taxon>Gammaproteobacteria</taxon>
        <taxon>Enterobacterales</taxon>
        <taxon>Erwiniaceae</taxon>
        <taxon>Buchnera</taxon>
    </lineage>
</organism>
<protein>
    <recommendedName>
        <fullName>Dihydrofolate synthase/folylpolyglutamate synthase</fullName>
        <shortName>DHFS / FPGS</shortName>
        <ecNumber>6.3.2.12</ecNumber>
        <ecNumber>6.3.2.17</ecNumber>
    </recommendedName>
    <alternativeName>
        <fullName>Folylpoly-gamma-glutamate synthetase-dihydrofolate synthetase</fullName>
    </alternativeName>
    <alternativeName>
        <fullName>Folylpolyglutamate synthetase</fullName>
    </alternativeName>
    <alternativeName>
        <fullName>Tetrahydrofolylpolyglutamate synthase</fullName>
    </alternativeName>
</protein>
<evidence type="ECO:0000250" key="1">
    <source>
        <dbReference type="UniProtKB" id="P08192"/>
    </source>
</evidence>
<evidence type="ECO:0000305" key="2"/>
<name>FOLC_BUCBP</name>
<keyword id="KW-0067">ATP-binding</keyword>
<keyword id="KW-0289">Folate biosynthesis</keyword>
<keyword id="KW-0436">Ligase</keyword>
<keyword id="KW-0460">Magnesium</keyword>
<keyword id="KW-0479">Metal-binding</keyword>
<keyword id="KW-0547">Nucleotide-binding</keyword>
<keyword id="KW-0554">One-carbon metabolism</keyword>
<keyword id="KW-1185">Reference proteome</keyword>
<sequence length="426" mass="48571">MINKKLARSFSLYEWLYYLDHFMLDNIDPTLNRVFYVAKKLGVLKSKAFVFIVGGTNGKGSTCHVLENLLLNSGYRVGLYTSPHLMRYTERVRINGFELEHLYHISAFNDVKYFQNDVLLTRFEFITLSALILFKSYNLDIIILEVGLGGRLDATNILSADVSVITNIDIDHSKILGVNRSSISVEKSGIFRKNKIAIVADNNFPKVAQYLAKKKKVRLRIVNIDWIYKKIEFEWSFCSSKITWLHLPLPRNVSLDSVATALSAVSESGIKINQKVFRSCISEITLCGRFETISYNPIIILDVAHNPHSARYLFKKMSSFKKNGNIFAVVGILKEKNIKDIVSPLIPIVDYWYCITLLTHRSATSSEIIKYLPNHNSQISKNMTVALEKIFDKVTNNDIVLIFGSFITVCEANKFLANKVKNFKLL</sequence>
<gene>
    <name type="primary">folC</name>
    <name type="ordered locus">bbp_157</name>
</gene>
<dbReference type="EC" id="6.3.2.12"/>
<dbReference type="EC" id="6.3.2.17"/>
<dbReference type="EMBL" id="AE016826">
    <property type="protein sequence ID" value="AAO26891.1"/>
    <property type="molecule type" value="Genomic_DNA"/>
</dbReference>
<dbReference type="RefSeq" id="WP_011091292.1">
    <property type="nucleotide sequence ID" value="NC_004545.1"/>
</dbReference>
<dbReference type="SMR" id="Q89AT2"/>
<dbReference type="STRING" id="224915.bbp_157"/>
<dbReference type="KEGG" id="bab:bbp_157"/>
<dbReference type="eggNOG" id="COG0285">
    <property type="taxonomic scope" value="Bacteria"/>
</dbReference>
<dbReference type="HOGENOM" id="CLU_015869_1_0_6"/>
<dbReference type="OrthoDB" id="9809356at2"/>
<dbReference type="UniPathway" id="UPA00077">
    <property type="reaction ID" value="UER00157"/>
</dbReference>
<dbReference type="UniPathway" id="UPA00850"/>
<dbReference type="Proteomes" id="UP000000601">
    <property type="component" value="Chromosome"/>
</dbReference>
<dbReference type="GO" id="GO:0005737">
    <property type="term" value="C:cytoplasm"/>
    <property type="evidence" value="ECO:0007669"/>
    <property type="project" value="TreeGrafter"/>
</dbReference>
<dbReference type="GO" id="GO:0005524">
    <property type="term" value="F:ATP binding"/>
    <property type="evidence" value="ECO:0007669"/>
    <property type="project" value="UniProtKB-KW"/>
</dbReference>
<dbReference type="GO" id="GO:0008841">
    <property type="term" value="F:dihydrofolate synthase activity"/>
    <property type="evidence" value="ECO:0007669"/>
    <property type="project" value="UniProtKB-EC"/>
</dbReference>
<dbReference type="GO" id="GO:0046872">
    <property type="term" value="F:metal ion binding"/>
    <property type="evidence" value="ECO:0007669"/>
    <property type="project" value="UniProtKB-KW"/>
</dbReference>
<dbReference type="GO" id="GO:0004326">
    <property type="term" value="F:tetrahydrofolylpolyglutamate synthase activity"/>
    <property type="evidence" value="ECO:0007669"/>
    <property type="project" value="UniProtKB-EC"/>
</dbReference>
<dbReference type="GO" id="GO:0046656">
    <property type="term" value="P:folic acid biosynthetic process"/>
    <property type="evidence" value="ECO:0007669"/>
    <property type="project" value="UniProtKB-KW"/>
</dbReference>
<dbReference type="GO" id="GO:0006730">
    <property type="term" value="P:one-carbon metabolic process"/>
    <property type="evidence" value="ECO:0007669"/>
    <property type="project" value="UniProtKB-KW"/>
</dbReference>
<dbReference type="GO" id="GO:0046654">
    <property type="term" value="P:tetrahydrofolate biosynthetic process"/>
    <property type="evidence" value="ECO:0007669"/>
    <property type="project" value="UniProtKB-UniPathway"/>
</dbReference>
<dbReference type="Gene3D" id="3.90.190.20">
    <property type="entry name" value="Mur ligase, C-terminal domain"/>
    <property type="match status" value="1"/>
</dbReference>
<dbReference type="Gene3D" id="3.40.1190.10">
    <property type="entry name" value="Mur-like, catalytic domain"/>
    <property type="match status" value="1"/>
</dbReference>
<dbReference type="InterPro" id="IPR001645">
    <property type="entry name" value="Folylpolyglutamate_synth"/>
</dbReference>
<dbReference type="InterPro" id="IPR018109">
    <property type="entry name" value="Folylpolyglutamate_synth_CS"/>
</dbReference>
<dbReference type="InterPro" id="IPR036565">
    <property type="entry name" value="Mur-like_cat_sf"/>
</dbReference>
<dbReference type="InterPro" id="IPR004101">
    <property type="entry name" value="Mur_ligase_C"/>
</dbReference>
<dbReference type="InterPro" id="IPR036615">
    <property type="entry name" value="Mur_ligase_C_dom_sf"/>
</dbReference>
<dbReference type="InterPro" id="IPR013221">
    <property type="entry name" value="Mur_ligase_cen"/>
</dbReference>
<dbReference type="NCBIfam" id="TIGR01499">
    <property type="entry name" value="folC"/>
    <property type="match status" value="1"/>
</dbReference>
<dbReference type="NCBIfam" id="NF008101">
    <property type="entry name" value="PRK10846.1"/>
    <property type="match status" value="1"/>
</dbReference>
<dbReference type="PANTHER" id="PTHR11136:SF0">
    <property type="entry name" value="DIHYDROFOLATE SYNTHETASE-RELATED"/>
    <property type="match status" value="1"/>
</dbReference>
<dbReference type="PANTHER" id="PTHR11136">
    <property type="entry name" value="FOLYLPOLYGLUTAMATE SYNTHASE-RELATED"/>
    <property type="match status" value="1"/>
</dbReference>
<dbReference type="Pfam" id="PF02875">
    <property type="entry name" value="Mur_ligase_C"/>
    <property type="match status" value="1"/>
</dbReference>
<dbReference type="Pfam" id="PF08245">
    <property type="entry name" value="Mur_ligase_M"/>
    <property type="match status" value="1"/>
</dbReference>
<dbReference type="PIRSF" id="PIRSF001563">
    <property type="entry name" value="Folylpolyglu_synth"/>
    <property type="match status" value="1"/>
</dbReference>
<dbReference type="SUPFAM" id="SSF53623">
    <property type="entry name" value="MurD-like peptide ligases, catalytic domain"/>
    <property type="match status" value="1"/>
</dbReference>
<dbReference type="SUPFAM" id="SSF53244">
    <property type="entry name" value="MurD-like peptide ligases, peptide-binding domain"/>
    <property type="match status" value="1"/>
</dbReference>
<dbReference type="PROSITE" id="PS01011">
    <property type="entry name" value="FOLYLPOLYGLU_SYNT_1"/>
    <property type="match status" value="1"/>
</dbReference>
<dbReference type="PROSITE" id="PS01012">
    <property type="entry name" value="FOLYLPOLYGLU_SYNT_2"/>
    <property type="match status" value="1"/>
</dbReference>